<proteinExistence type="evidence at protein level"/>
<feature type="chain" id="PRO_0000055690" description="Protein kinase C gamma type">
    <location>
        <begin position="1"/>
        <end position="697"/>
    </location>
</feature>
<feature type="domain" description="C2" evidence="5">
    <location>
        <begin position="157"/>
        <end position="275"/>
    </location>
</feature>
<feature type="domain" description="Protein kinase" evidence="6">
    <location>
        <begin position="351"/>
        <end position="614"/>
    </location>
</feature>
<feature type="domain" description="AGC-kinase C-terminal" evidence="8">
    <location>
        <begin position="615"/>
        <end position="685"/>
    </location>
</feature>
<feature type="zinc finger region" description="Phorbol-ester/DAG-type 1" evidence="7">
    <location>
        <begin position="35"/>
        <end position="85"/>
    </location>
</feature>
<feature type="zinc finger region" description="Phorbol-ester/DAG-type 2" evidence="7">
    <location>
        <begin position="100"/>
        <end position="150"/>
    </location>
</feature>
<feature type="active site" description="Proton acceptor" evidence="6 9">
    <location>
        <position position="480"/>
    </location>
</feature>
<feature type="binding site" evidence="2">
    <location>
        <position position="186"/>
    </location>
    <ligand>
        <name>Ca(2+)</name>
        <dbReference type="ChEBI" id="CHEBI:29108"/>
        <label>1</label>
    </ligand>
</feature>
<feature type="binding site" evidence="2">
    <location>
        <position position="187"/>
    </location>
    <ligand>
        <name>Ca(2+)</name>
        <dbReference type="ChEBI" id="CHEBI:29108"/>
        <label>1</label>
    </ligand>
</feature>
<feature type="binding site" evidence="2">
    <location>
        <position position="187"/>
    </location>
    <ligand>
        <name>Ca(2+)</name>
        <dbReference type="ChEBI" id="CHEBI:29108"/>
        <label>2</label>
    </ligand>
</feature>
<feature type="binding site" evidence="2">
    <location>
        <position position="193"/>
    </location>
    <ligand>
        <name>Ca(2+)</name>
        <dbReference type="ChEBI" id="CHEBI:29108"/>
        <label>2</label>
    </ligand>
</feature>
<feature type="binding site" evidence="2">
    <location>
        <position position="246"/>
    </location>
    <ligand>
        <name>Ca(2+)</name>
        <dbReference type="ChEBI" id="CHEBI:29108"/>
        <label>1</label>
    </ligand>
</feature>
<feature type="binding site" evidence="2">
    <location>
        <position position="246"/>
    </location>
    <ligand>
        <name>Ca(2+)</name>
        <dbReference type="ChEBI" id="CHEBI:29108"/>
        <label>2</label>
    </ligand>
</feature>
<feature type="binding site" evidence="2">
    <location>
        <position position="247"/>
    </location>
    <ligand>
        <name>Ca(2+)</name>
        <dbReference type="ChEBI" id="CHEBI:29108"/>
        <label>2</label>
    </ligand>
</feature>
<feature type="binding site" evidence="2">
    <location>
        <position position="248"/>
    </location>
    <ligand>
        <name>Ca(2+)</name>
        <dbReference type="ChEBI" id="CHEBI:29108"/>
        <label>1</label>
    </ligand>
</feature>
<feature type="binding site" evidence="2">
    <location>
        <position position="248"/>
    </location>
    <ligand>
        <name>Ca(2+)</name>
        <dbReference type="ChEBI" id="CHEBI:29108"/>
        <label>2</label>
    </ligand>
</feature>
<feature type="binding site" evidence="2">
    <location>
        <position position="248"/>
    </location>
    <ligand>
        <name>Ca(2+)</name>
        <dbReference type="ChEBI" id="CHEBI:29108"/>
        <label>3</label>
    </ligand>
</feature>
<feature type="binding site" evidence="2">
    <location>
        <position position="251"/>
    </location>
    <ligand>
        <name>Ca(2+)</name>
        <dbReference type="ChEBI" id="CHEBI:29108"/>
        <label>3</label>
    </ligand>
</feature>
<feature type="binding site" evidence="2">
    <location>
        <position position="252"/>
    </location>
    <ligand>
        <name>Ca(2+)</name>
        <dbReference type="ChEBI" id="CHEBI:29108"/>
        <label>3</label>
    </ligand>
</feature>
<feature type="binding site" evidence="2">
    <location>
        <position position="254"/>
    </location>
    <ligand>
        <name>Ca(2+)</name>
        <dbReference type="ChEBI" id="CHEBI:29108"/>
        <label>1</label>
    </ligand>
</feature>
<feature type="binding site" evidence="2">
    <location>
        <position position="254"/>
    </location>
    <ligand>
        <name>Ca(2+)</name>
        <dbReference type="ChEBI" id="CHEBI:29108"/>
        <label>3</label>
    </ligand>
</feature>
<feature type="binding site" evidence="6">
    <location>
        <begin position="357"/>
        <end position="365"/>
    </location>
    <ligand>
        <name>ATP</name>
        <dbReference type="ChEBI" id="CHEBI:30616"/>
    </ligand>
</feature>
<feature type="binding site" evidence="6">
    <location>
        <position position="380"/>
    </location>
    <ligand>
        <name>ATP</name>
        <dbReference type="ChEBI" id="CHEBI:30616"/>
    </ligand>
</feature>
<feature type="modified residue" description="Phosphothreonine; by autocatalysis" evidence="1">
    <location>
        <position position="250"/>
    </location>
</feature>
<feature type="modified residue" description="Phosphoserine" evidence="22">
    <location>
        <position position="320"/>
    </location>
</feature>
<feature type="modified residue" description="Phosphoserine" evidence="22">
    <location>
        <position position="322"/>
    </location>
</feature>
<feature type="modified residue" description="Phosphoserine" evidence="22">
    <location>
        <position position="326"/>
    </location>
</feature>
<feature type="modified residue" description="Phosphoserine" evidence="22">
    <location>
        <position position="328"/>
    </location>
</feature>
<feature type="modified residue" description="Phosphoserine" evidence="22">
    <location>
        <position position="330"/>
    </location>
</feature>
<feature type="modified residue" description="Phosphothreonine" evidence="22">
    <location>
        <position position="332"/>
    </location>
</feature>
<feature type="modified residue" description="Phosphoserine" evidence="22">
    <location>
        <position position="373"/>
    </location>
</feature>
<feature type="modified residue" description="Phosphothreonine; by PDPK1" evidence="21">
    <location>
        <position position="514"/>
    </location>
</feature>
<feature type="modified residue" description="Phosphothreonine; by autocatalysis" evidence="4">
    <location>
        <position position="648"/>
    </location>
</feature>
<feature type="modified residue" description="Phosphothreonine; by autocatalysis" evidence="14 16">
    <location>
        <position position="655"/>
    </location>
</feature>
<feature type="modified residue" description="Phosphothreonine; by autocatalysis" evidence="14">
    <location>
        <position position="674"/>
    </location>
</feature>
<feature type="modified residue" description="Phosphotyrosine; by SYK" evidence="1">
    <location>
        <position position="675"/>
    </location>
</feature>
<feature type="modified residue" description="Phosphoserine" evidence="3">
    <location>
        <position position="687"/>
    </location>
</feature>
<protein>
    <recommendedName>
        <fullName>Protein kinase C gamma type</fullName>
        <shortName>PKC-gamma</shortName>
        <ecNumber evidence="2">2.7.11.13</ecNumber>
    </recommendedName>
</protein>
<reference key="1">
    <citation type="journal article" date="1993" name="Gene">
        <title>Isolation and sequence of a mouse brain cDNA coding for protein kinase C-gamma isozyme.</title>
        <authorList>
            <person name="Bowers B.J."/>
            <person name="Parham C.L."/>
            <person name="Sikela J.M."/>
            <person name="Wehner J.M."/>
        </authorList>
    </citation>
    <scope>NUCLEOTIDE SEQUENCE [MRNA]</scope>
    <source>
        <tissue>Brain</tissue>
    </source>
</reference>
<reference key="2">
    <citation type="submission" date="1994-01" db="EMBL/GenBank/DDBJ databases">
        <authorList>
            <person name="Tseng C.P."/>
            <person name="Verma A."/>
        </authorList>
    </citation>
    <scope>NUCLEOTIDE SEQUENCE [MRNA]</scope>
    <source>
        <strain>BALB/cJ</strain>
        <tissue>Brain</tissue>
    </source>
</reference>
<reference key="3">
    <citation type="journal article" date="1993" name="Cell">
        <title>Modified hippocampal long-term potentiation in PKC gamma-mutant mice.</title>
        <authorList>
            <person name="Abeliovich A."/>
            <person name="Chen C."/>
            <person name="Goda Y."/>
            <person name="Silva A.J."/>
            <person name="Stevens C.F."/>
            <person name="Tonegawa S."/>
        </authorList>
    </citation>
    <scope>FUNCTION IN LONG-TERM POTENTIATION</scope>
</reference>
<reference key="4">
    <citation type="journal article" date="1995" name="Cell">
        <title>Impaired motor coordination correlates with persistent multiple climbing fiber innervation in PKC gamma mutant mice.</title>
        <authorList>
            <person name="Chen C."/>
            <person name="Kano M."/>
            <person name="Abeliovich A."/>
            <person name="Chen L."/>
            <person name="Bao S."/>
            <person name="Kim J.J."/>
            <person name="Hashimoto K."/>
            <person name="Thompson R.F."/>
            <person name="Tonegawa S."/>
        </authorList>
    </citation>
    <scope>DISRUPTION PHENOTYPE</scope>
</reference>
<reference key="5">
    <citation type="journal article" date="1997" name="Science">
        <title>Preserved acute pain and reduced neuropathic pain in mice lacking PKCgamma.</title>
        <authorList>
            <person name="Malmberg A.B."/>
            <person name="Chen C."/>
            <person name="Tonegawa S."/>
            <person name="Basbaum A.I."/>
        </authorList>
    </citation>
    <scope>FUNCTION IN NEUROPATHIC PAIN</scope>
</reference>
<reference key="6">
    <citation type="journal article" date="2001" name="J. Biol. Chem.">
        <title>Enhanced mu-opioid responses in the spinal cord of mice lacking protein kinase Cgamma isoform.</title>
        <authorList>
            <person name="Narita M."/>
            <person name="Mizoguchi H."/>
            <person name="Suzuki T."/>
            <person name="Narita M."/>
            <person name="Dun N.J."/>
            <person name="Imai S."/>
            <person name="Yajima Y."/>
            <person name="Nagase H."/>
            <person name="Suzuki T."/>
            <person name="Tseng L.F."/>
        </authorList>
    </citation>
    <scope>FUNCTION IN OPIOID SIGNALING</scope>
</reference>
<reference key="7">
    <citation type="journal article" date="2001" name="J. Neurosci.">
        <title>Involvement of spinal protein kinase Cgamma in the attenuation of opioid mu-receptor-mediated G-protein activation after chronic intrathecal administration of [D-Ala2,N-MePhe4,Gly-Ol(5)]enkephalin.</title>
        <authorList>
            <person name="Narita M."/>
            <person name="Mizoguchi H."/>
            <person name="Narita M."/>
            <person name="Nagase H."/>
            <person name="Suzuki T."/>
            <person name="Tseng L.F."/>
        </authorList>
    </citation>
    <scope>FUNCTION IN OPIOID SIGNALING</scope>
</reference>
<reference key="8">
    <citation type="journal article" date="2001" name="Neuroscience">
        <title>Involvement of protein kinase Cgamma isoform in morphine-induced reinforcing effects.</title>
        <authorList>
            <person name="Narita M."/>
            <person name="Aoki T."/>
            <person name="Ozaki S."/>
            <person name="Yajima Y."/>
            <person name="Suzuki T."/>
        </authorList>
    </citation>
    <scope>FUNCTION IN OPIOID SIGNALING</scope>
</reference>
<reference key="9">
    <citation type="journal article" date="2001" name="Pain">
        <title>Reduced development of tolerance to the analgesic effects of morphine and clonidine in PKC gamma mutant mice.</title>
        <authorList>
            <person name="Zeitz K.P."/>
            <person name="Malmberg A.B."/>
            <person name="Gilbert H."/>
            <person name="Basbaum A.I."/>
        </authorList>
    </citation>
    <scope>FUNCTION IN OPIOID SIGNALING</scope>
</reference>
<reference key="10">
    <citation type="journal article" date="2007" name="Biochem. Biophys. Res. Commun.">
        <title>Abnormal features in mutant cerebellar Purkinje cells lacking junctophilins.</title>
        <authorList>
            <person name="Ikeda A."/>
            <person name="Miyazaki T."/>
            <person name="Kakizawa S."/>
            <person name="Okuno Y."/>
            <person name="Tsuchiya S."/>
            <person name="Myomoto A."/>
            <person name="Saito S.Y."/>
            <person name="Yamamoto T."/>
            <person name="Yamazaki T."/>
            <person name="Iino M."/>
            <person name="Tsujimoto G."/>
            <person name="Watanabe M."/>
            <person name="Takeshima H."/>
        </authorList>
    </citation>
    <scope>PHOSPHORYLATION AT THR-514; THR-655 AND THR-674</scope>
    <scope>SUBCELLULAR LOCATION</scope>
    <scope>FUNCTION</scope>
    <scope>TISSUE SPECIFICITY</scope>
</reference>
<reference key="11">
    <citation type="journal article" date="2007" name="Mol. Cell. Proteomics">
        <title>Qualitative and quantitative analyses of protein phosphorylation in naive and stimulated mouse synaptosomal preparations.</title>
        <authorList>
            <person name="Munton R.P."/>
            <person name="Tweedie-Cullen R."/>
            <person name="Livingstone-Zatchej M."/>
            <person name="Weinandy F."/>
            <person name="Waidelich M."/>
            <person name="Longo D."/>
            <person name="Gehrig P."/>
            <person name="Potthast F."/>
            <person name="Rutishauser D."/>
            <person name="Gerrits B."/>
            <person name="Panse C."/>
            <person name="Schlapbach R."/>
            <person name="Mansuy I.M."/>
        </authorList>
    </citation>
    <scope>IDENTIFICATION BY MASS SPECTROMETRY [LARGE SCALE ANALYSIS]</scope>
    <source>
        <tissue>Brain cortex</tissue>
    </source>
</reference>
<reference key="12">
    <citation type="journal article" date="2008" name="Neurochem. Res.">
        <title>Isoflurane inhibits protein kinase Cgamma and calcium/calmodulin dependent protein kinase ii-alpha translocation to synaptic membranes in ischemic mice brains.</title>
        <authorList>
            <person name="Matsumoto S."/>
            <person name="Murozono M."/>
            <person name="Nagaoka D."/>
            <person name="Matsuoka S."/>
            <person name="Takeda A."/>
            <person name="Narita H."/>
            <person name="Watanabe S."/>
            <person name="Isshiki A."/>
            <person name="Watanabe Y."/>
        </authorList>
    </citation>
    <scope>SUBCELLULAR LOCATION</scope>
</reference>
<reference key="13">
    <citation type="journal article" date="2010" name="Cell">
        <title>A tissue-specific atlas of mouse protein phosphorylation and expression.</title>
        <authorList>
            <person name="Huttlin E.L."/>
            <person name="Jedrychowski M.P."/>
            <person name="Elias J.E."/>
            <person name="Goswami T."/>
            <person name="Rad R."/>
            <person name="Beausoleil S.A."/>
            <person name="Villen J."/>
            <person name="Haas W."/>
            <person name="Sowa M.E."/>
            <person name="Gygi S.P."/>
        </authorList>
    </citation>
    <scope>PHOSPHORYLATION [LARGE SCALE ANALYSIS] AT SER-320; SER-322; SER-326; SER-328; SER-330; THR-332 AND SER-373</scope>
    <scope>IDENTIFICATION BY MASS SPECTROMETRY [LARGE SCALE ANALYSIS]</scope>
    <source>
        <tissue>Brain</tissue>
    </source>
</reference>
<reference key="14">
    <citation type="journal article" date="2012" name="Proc. Natl. Acad. Sci. U.S.A.">
        <title>PKCgamma participates in food entrainment by regulating BMAL1.</title>
        <authorList>
            <person name="Zhang L."/>
            <person name="Abraham D."/>
            <person name="Lin S.T."/>
            <person name="Oster H."/>
            <person name="Eichele G."/>
            <person name="Fu Y.H."/>
            <person name="Ptacek L.J."/>
        </authorList>
    </citation>
    <scope>FUNCTION</scope>
    <scope>INTERACTION WITH BMAL1</scope>
    <scope>DISRUPTION PHENOTYPE</scope>
    <scope>TISSUE SPECIFICITY</scope>
    <scope>PHOSPHORYLATION AT THR-655</scope>
</reference>
<accession>P63318</accession>
<accession>P05697</accession>
<dbReference type="EC" id="2.7.11.13" evidence="2"/>
<dbReference type="EMBL" id="X67129">
    <property type="protein sequence ID" value="CAA47608.1"/>
    <property type="molecule type" value="mRNA"/>
</dbReference>
<dbReference type="EMBL" id="L28035">
    <property type="protein sequence ID" value="AAA39939.1"/>
    <property type="molecule type" value="mRNA"/>
</dbReference>
<dbReference type="CCDS" id="CCDS57470.1"/>
<dbReference type="PIR" id="JN0548">
    <property type="entry name" value="JN0548"/>
</dbReference>
<dbReference type="RefSeq" id="NP_035232.1">
    <property type="nucleotide sequence ID" value="NM_011102.5"/>
</dbReference>
<dbReference type="SMR" id="P63318"/>
<dbReference type="BioGRID" id="202196">
    <property type="interactions" value="33"/>
</dbReference>
<dbReference type="CORUM" id="P63318"/>
<dbReference type="FunCoup" id="P63318">
    <property type="interactions" value="1669"/>
</dbReference>
<dbReference type="IntAct" id="P63318">
    <property type="interactions" value="20"/>
</dbReference>
<dbReference type="MINT" id="P63318"/>
<dbReference type="STRING" id="10090.ENSMUSP00000097874"/>
<dbReference type="GlyGen" id="P63318">
    <property type="glycosylation" value="3 sites, 1 N-linked glycan (1 site), 1 O-linked glycan (1 site)"/>
</dbReference>
<dbReference type="iPTMnet" id="P63318"/>
<dbReference type="PhosphoSitePlus" id="P63318"/>
<dbReference type="SwissPalm" id="P63318"/>
<dbReference type="jPOST" id="P63318"/>
<dbReference type="PaxDb" id="10090-ENSMUSP00000097874"/>
<dbReference type="PeptideAtlas" id="P63318"/>
<dbReference type="ProteomicsDB" id="264862"/>
<dbReference type="Antibodypedia" id="32756">
    <property type="antibodies" value="648 antibodies from 39 providers"/>
</dbReference>
<dbReference type="DNASU" id="18752"/>
<dbReference type="Ensembl" id="ENSMUST00000100301.11">
    <property type="protein sequence ID" value="ENSMUSP00000097874.5"/>
    <property type="gene ID" value="ENSMUSG00000078816.11"/>
</dbReference>
<dbReference type="GeneID" id="18752"/>
<dbReference type="KEGG" id="mmu:18752"/>
<dbReference type="UCSC" id="uc029wcz.2">
    <property type="organism name" value="mouse"/>
</dbReference>
<dbReference type="AGR" id="MGI:97597"/>
<dbReference type="CTD" id="5582"/>
<dbReference type="MGI" id="MGI:97597">
    <property type="gene designation" value="Prkcg"/>
</dbReference>
<dbReference type="VEuPathDB" id="HostDB:ENSMUSG00000078816"/>
<dbReference type="eggNOG" id="KOG0696">
    <property type="taxonomic scope" value="Eukaryota"/>
</dbReference>
<dbReference type="GeneTree" id="ENSGT00940000161219"/>
<dbReference type="InParanoid" id="P63318"/>
<dbReference type="OMA" id="DADNCGL"/>
<dbReference type="OrthoDB" id="63267at2759"/>
<dbReference type="PhylomeDB" id="P63318"/>
<dbReference type="TreeFam" id="TF351133"/>
<dbReference type="BRENDA" id="2.7.11.13">
    <property type="organism ID" value="3474"/>
</dbReference>
<dbReference type="Reactome" id="R-MMU-111933">
    <property type="pathway name" value="Calmodulin induced events"/>
</dbReference>
<dbReference type="Reactome" id="R-MMU-114516">
    <property type="pathway name" value="Disinhibition of SNARE formation"/>
</dbReference>
<dbReference type="Reactome" id="R-MMU-416993">
    <property type="pathway name" value="Trafficking of GluR2-containing AMPA receptors"/>
</dbReference>
<dbReference type="Reactome" id="R-MMU-5099900">
    <property type="pathway name" value="WNT5A-dependent internalization of FZD4"/>
</dbReference>
<dbReference type="Reactome" id="R-MMU-76005">
    <property type="pathway name" value="Response to elevated platelet cytosolic Ca2+"/>
</dbReference>
<dbReference type="BioGRID-ORCS" id="18752">
    <property type="hits" value="0 hits in 115 CRISPR screens"/>
</dbReference>
<dbReference type="CD-CODE" id="CE726F99">
    <property type="entry name" value="Postsynaptic density"/>
</dbReference>
<dbReference type="PRO" id="PR:P63318"/>
<dbReference type="Proteomes" id="UP000000589">
    <property type="component" value="Chromosome 7"/>
</dbReference>
<dbReference type="RNAct" id="P63318">
    <property type="molecule type" value="protein"/>
</dbReference>
<dbReference type="Bgee" id="ENSMUSG00000078816">
    <property type="expression patterns" value="Expressed in Ammon's horn and 59 other cell types or tissues"/>
</dbReference>
<dbReference type="ExpressionAtlas" id="P63318">
    <property type="expression patterns" value="baseline and differential"/>
</dbReference>
<dbReference type="GO" id="GO:0044305">
    <property type="term" value="C:calyx of Held"/>
    <property type="evidence" value="ECO:0000314"/>
    <property type="project" value="SynGO"/>
</dbReference>
<dbReference type="GO" id="GO:0005911">
    <property type="term" value="C:cell-cell junction"/>
    <property type="evidence" value="ECO:0000314"/>
    <property type="project" value="MGI"/>
</dbReference>
<dbReference type="GO" id="GO:0005737">
    <property type="term" value="C:cytoplasm"/>
    <property type="evidence" value="ECO:0000314"/>
    <property type="project" value="UniProtKB"/>
</dbReference>
<dbReference type="GO" id="GO:0005829">
    <property type="term" value="C:cytosol"/>
    <property type="evidence" value="ECO:0000250"/>
    <property type="project" value="UniProtKB"/>
</dbReference>
<dbReference type="GO" id="GO:0030425">
    <property type="term" value="C:dendrite"/>
    <property type="evidence" value="ECO:0000314"/>
    <property type="project" value="MGI"/>
</dbReference>
<dbReference type="GO" id="GO:0005634">
    <property type="term" value="C:nucleus"/>
    <property type="evidence" value="ECO:0000314"/>
    <property type="project" value="MGI"/>
</dbReference>
<dbReference type="GO" id="GO:0048471">
    <property type="term" value="C:perinuclear region of cytoplasm"/>
    <property type="evidence" value="ECO:0000250"/>
    <property type="project" value="UniProtKB"/>
</dbReference>
<dbReference type="GO" id="GO:0005886">
    <property type="term" value="C:plasma membrane"/>
    <property type="evidence" value="ECO:0000314"/>
    <property type="project" value="UniProtKB"/>
</dbReference>
<dbReference type="GO" id="GO:0099524">
    <property type="term" value="C:postsynaptic cytosol"/>
    <property type="evidence" value="ECO:0000304"/>
    <property type="project" value="UniProt"/>
</dbReference>
<dbReference type="GO" id="GO:0014069">
    <property type="term" value="C:postsynaptic density"/>
    <property type="evidence" value="ECO:0000314"/>
    <property type="project" value="MGI"/>
</dbReference>
<dbReference type="GO" id="GO:0099523">
    <property type="term" value="C:presynaptic cytosol"/>
    <property type="evidence" value="ECO:0000314"/>
    <property type="project" value="SynGO"/>
</dbReference>
<dbReference type="GO" id="GO:0097060">
    <property type="term" value="C:synaptic membrane"/>
    <property type="evidence" value="ECO:0000314"/>
    <property type="project" value="UniProtKB"/>
</dbReference>
<dbReference type="GO" id="GO:0005524">
    <property type="term" value="F:ATP binding"/>
    <property type="evidence" value="ECO:0007669"/>
    <property type="project" value="UniProtKB-KW"/>
</dbReference>
<dbReference type="GO" id="GO:0004698">
    <property type="term" value="F:calcium,diacylglycerol-dependent serine/threonine kinase activity"/>
    <property type="evidence" value="ECO:0000314"/>
    <property type="project" value="UniProt"/>
</dbReference>
<dbReference type="GO" id="GO:0106310">
    <property type="term" value="F:protein serine kinase activity"/>
    <property type="evidence" value="ECO:0007669"/>
    <property type="project" value="RHEA"/>
</dbReference>
<dbReference type="GO" id="GO:0004712">
    <property type="term" value="F:protein serine/threonine/tyrosine kinase activity"/>
    <property type="evidence" value="ECO:0000266"/>
    <property type="project" value="MGI"/>
</dbReference>
<dbReference type="GO" id="GO:0008270">
    <property type="term" value="F:zinc ion binding"/>
    <property type="evidence" value="ECO:0007669"/>
    <property type="project" value="UniProtKB-KW"/>
</dbReference>
<dbReference type="GO" id="GO:0007268">
    <property type="term" value="P:chemical synaptic transmission"/>
    <property type="evidence" value="ECO:0000315"/>
    <property type="project" value="UniProtKB"/>
</dbReference>
<dbReference type="GO" id="GO:0007635">
    <property type="term" value="P:chemosensory behavior"/>
    <property type="evidence" value="ECO:0000315"/>
    <property type="project" value="MGI"/>
</dbReference>
<dbReference type="GO" id="GO:0060384">
    <property type="term" value="P:innervation"/>
    <property type="evidence" value="ECO:0000315"/>
    <property type="project" value="UniProtKB"/>
</dbReference>
<dbReference type="GO" id="GO:0007611">
    <property type="term" value="P:learning or memory"/>
    <property type="evidence" value="ECO:0007669"/>
    <property type="project" value="Ensembl"/>
</dbReference>
<dbReference type="GO" id="GO:0060291">
    <property type="term" value="P:long-term synaptic potentiation"/>
    <property type="evidence" value="ECO:0007669"/>
    <property type="project" value="Ensembl"/>
</dbReference>
<dbReference type="GO" id="GO:0043524">
    <property type="term" value="P:negative regulation of neuron apoptotic process"/>
    <property type="evidence" value="ECO:0000250"/>
    <property type="project" value="UniProtKB"/>
</dbReference>
<dbReference type="GO" id="GO:1901799">
    <property type="term" value="P:negative regulation of proteasomal protein catabolic process"/>
    <property type="evidence" value="ECO:0000315"/>
    <property type="project" value="UniProtKB"/>
</dbReference>
<dbReference type="GO" id="GO:0031397">
    <property type="term" value="P:negative regulation of protein ubiquitination"/>
    <property type="evidence" value="ECO:0000315"/>
    <property type="project" value="UniProtKB"/>
</dbReference>
<dbReference type="GO" id="GO:0007200">
    <property type="term" value="P:phospholipase C-activating G protein-coupled receptor signaling pathway"/>
    <property type="evidence" value="ECO:0000314"/>
    <property type="project" value="UniProt"/>
</dbReference>
<dbReference type="GO" id="GO:0032425">
    <property type="term" value="P:positive regulation of mismatch repair"/>
    <property type="evidence" value="ECO:0007669"/>
    <property type="project" value="Ensembl"/>
</dbReference>
<dbReference type="GO" id="GO:0099171">
    <property type="term" value="P:presynaptic modulation of chemical synaptic transmission"/>
    <property type="evidence" value="ECO:0000314"/>
    <property type="project" value="SynGO"/>
</dbReference>
<dbReference type="GO" id="GO:0042752">
    <property type="term" value="P:regulation of circadian rhythm"/>
    <property type="evidence" value="ECO:0000315"/>
    <property type="project" value="UniProtKB"/>
</dbReference>
<dbReference type="GO" id="GO:0050764">
    <property type="term" value="P:regulation of phagocytosis"/>
    <property type="evidence" value="ECO:0000315"/>
    <property type="project" value="MGI"/>
</dbReference>
<dbReference type="GO" id="GO:0032095">
    <property type="term" value="P:regulation of response to food"/>
    <property type="evidence" value="ECO:0000315"/>
    <property type="project" value="UniProtKB"/>
</dbReference>
<dbReference type="GO" id="GO:2000300">
    <property type="term" value="P:regulation of synaptic vesicle exocytosis"/>
    <property type="evidence" value="ECO:0000314"/>
    <property type="project" value="SynGO"/>
</dbReference>
<dbReference type="GO" id="GO:1990776">
    <property type="term" value="P:response to angiotensin"/>
    <property type="evidence" value="ECO:0007669"/>
    <property type="project" value="Ensembl"/>
</dbReference>
<dbReference type="GO" id="GO:0043278">
    <property type="term" value="P:response to morphine"/>
    <property type="evidence" value="ECO:0000315"/>
    <property type="project" value="UniProtKB"/>
</dbReference>
<dbReference type="GO" id="GO:0048265">
    <property type="term" value="P:response to pain"/>
    <property type="evidence" value="ECO:0000315"/>
    <property type="project" value="UniProtKB"/>
</dbReference>
<dbReference type="GO" id="GO:1990911">
    <property type="term" value="P:response to psychosocial stress"/>
    <property type="evidence" value="ECO:0007669"/>
    <property type="project" value="Ensembl"/>
</dbReference>
<dbReference type="GO" id="GO:0009636">
    <property type="term" value="P:response to toxic substance"/>
    <property type="evidence" value="ECO:0007669"/>
    <property type="project" value="Ensembl"/>
</dbReference>
<dbReference type="GO" id="GO:0048511">
    <property type="term" value="P:rhythmic process"/>
    <property type="evidence" value="ECO:0007669"/>
    <property type="project" value="UniProtKB-KW"/>
</dbReference>
<dbReference type="CDD" id="cd20833">
    <property type="entry name" value="C1_cPKC_rpt1"/>
    <property type="match status" value="1"/>
</dbReference>
<dbReference type="CDD" id="cd20836">
    <property type="entry name" value="C1_cPKC_rpt2"/>
    <property type="match status" value="1"/>
</dbReference>
<dbReference type="CDD" id="cd04026">
    <property type="entry name" value="C2_PKC_alpha_gamma"/>
    <property type="match status" value="1"/>
</dbReference>
<dbReference type="CDD" id="cd05587">
    <property type="entry name" value="STKc_cPKC"/>
    <property type="match status" value="1"/>
</dbReference>
<dbReference type="FunFam" id="2.60.40.150:FF:000012">
    <property type="entry name" value="Kinase C alpha type"/>
    <property type="match status" value="1"/>
</dbReference>
<dbReference type="FunFam" id="1.10.510.10:FF:000023">
    <property type="entry name" value="Protein kinase C"/>
    <property type="match status" value="1"/>
</dbReference>
<dbReference type="FunFam" id="3.30.200.20:FF:000080">
    <property type="entry name" value="Protein kinase C"/>
    <property type="match status" value="1"/>
</dbReference>
<dbReference type="FunFam" id="3.30.200.20:FF:000103">
    <property type="entry name" value="Protein kinase C"/>
    <property type="match status" value="1"/>
</dbReference>
<dbReference type="FunFam" id="3.30.60.20:FF:000006">
    <property type="entry name" value="Protein kinase C"/>
    <property type="match status" value="1"/>
</dbReference>
<dbReference type="FunFam" id="3.30.60.20:FF:000011">
    <property type="entry name" value="Protein kinase C"/>
    <property type="match status" value="1"/>
</dbReference>
<dbReference type="Gene3D" id="3.30.60.20">
    <property type="match status" value="2"/>
</dbReference>
<dbReference type="Gene3D" id="2.60.40.150">
    <property type="entry name" value="C2 domain"/>
    <property type="match status" value="1"/>
</dbReference>
<dbReference type="Gene3D" id="3.30.200.20">
    <property type="entry name" value="Phosphorylase Kinase, domain 1"/>
    <property type="match status" value="2"/>
</dbReference>
<dbReference type="Gene3D" id="1.10.510.10">
    <property type="entry name" value="Transferase(Phosphotransferase) domain 1"/>
    <property type="match status" value="1"/>
</dbReference>
<dbReference type="InterPro" id="IPR000961">
    <property type="entry name" value="AGC-kinase_C"/>
</dbReference>
<dbReference type="InterPro" id="IPR046349">
    <property type="entry name" value="C1-like_sf"/>
</dbReference>
<dbReference type="InterPro" id="IPR000008">
    <property type="entry name" value="C2_dom"/>
</dbReference>
<dbReference type="InterPro" id="IPR035892">
    <property type="entry name" value="C2_domain_sf"/>
</dbReference>
<dbReference type="InterPro" id="IPR020454">
    <property type="entry name" value="DAG/PE-bd"/>
</dbReference>
<dbReference type="InterPro" id="IPR011009">
    <property type="entry name" value="Kinase-like_dom_sf"/>
</dbReference>
<dbReference type="InterPro" id="IPR002219">
    <property type="entry name" value="PE/DAG-bd"/>
</dbReference>
<dbReference type="InterPro" id="IPR017892">
    <property type="entry name" value="Pkinase_C"/>
</dbReference>
<dbReference type="InterPro" id="IPR000719">
    <property type="entry name" value="Prot_kinase_dom"/>
</dbReference>
<dbReference type="InterPro" id="IPR017441">
    <property type="entry name" value="Protein_kinase_ATP_BS"/>
</dbReference>
<dbReference type="InterPro" id="IPR014375">
    <property type="entry name" value="Protein_kinase_C_a/b/g"/>
</dbReference>
<dbReference type="InterPro" id="IPR008271">
    <property type="entry name" value="Ser/Thr_kinase_AS"/>
</dbReference>
<dbReference type="PANTHER" id="PTHR24351">
    <property type="entry name" value="RIBOSOMAL PROTEIN S6 KINASE"/>
    <property type="match status" value="1"/>
</dbReference>
<dbReference type="Pfam" id="PF00130">
    <property type="entry name" value="C1_1"/>
    <property type="match status" value="2"/>
</dbReference>
<dbReference type="Pfam" id="PF00168">
    <property type="entry name" value="C2"/>
    <property type="match status" value="1"/>
</dbReference>
<dbReference type="Pfam" id="PF00069">
    <property type="entry name" value="Pkinase"/>
    <property type="match status" value="1"/>
</dbReference>
<dbReference type="Pfam" id="PF00433">
    <property type="entry name" value="Pkinase_C"/>
    <property type="match status" value="1"/>
</dbReference>
<dbReference type="PIRSF" id="PIRSF000550">
    <property type="entry name" value="PKC_alpha"/>
    <property type="match status" value="1"/>
</dbReference>
<dbReference type="PRINTS" id="PR00360">
    <property type="entry name" value="C2DOMAIN"/>
</dbReference>
<dbReference type="PRINTS" id="PR00008">
    <property type="entry name" value="DAGPEDOMAIN"/>
</dbReference>
<dbReference type="SMART" id="SM00109">
    <property type="entry name" value="C1"/>
    <property type="match status" value="2"/>
</dbReference>
<dbReference type="SMART" id="SM00239">
    <property type="entry name" value="C2"/>
    <property type="match status" value="1"/>
</dbReference>
<dbReference type="SMART" id="SM00133">
    <property type="entry name" value="S_TK_X"/>
    <property type="match status" value="1"/>
</dbReference>
<dbReference type="SMART" id="SM00220">
    <property type="entry name" value="S_TKc"/>
    <property type="match status" value="1"/>
</dbReference>
<dbReference type="SUPFAM" id="SSF49562">
    <property type="entry name" value="C2 domain (Calcium/lipid-binding domain, CaLB)"/>
    <property type="match status" value="1"/>
</dbReference>
<dbReference type="SUPFAM" id="SSF57889">
    <property type="entry name" value="Cysteine-rich domain"/>
    <property type="match status" value="2"/>
</dbReference>
<dbReference type="SUPFAM" id="SSF56112">
    <property type="entry name" value="Protein kinase-like (PK-like)"/>
    <property type="match status" value="1"/>
</dbReference>
<dbReference type="PROSITE" id="PS51285">
    <property type="entry name" value="AGC_KINASE_CTER"/>
    <property type="match status" value="1"/>
</dbReference>
<dbReference type="PROSITE" id="PS50004">
    <property type="entry name" value="C2"/>
    <property type="match status" value="1"/>
</dbReference>
<dbReference type="PROSITE" id="PS00107">
    <property type="entry name" value="PROTEIN_KINASE_ATP"/>
    <property type="match status" value="1"/>
</dbReference>
<dbReference type="PROSITE" id="PS50011">
    <property type="entry name" value="PROTEIN_KINASE_DOM"/>
    <property type="match status" value="1"/>
</dbReference>
<dbReference type="PROSITE" id="PS00108">
    <property type="entry name" value="PROTEIN_KINASE_ST"/>
    <property type="match status" value="1"/>
</dbReference>
<dbReference type="PROSITE" id="PS00479">
    <property type="entry name" value="ZF_DAG_PE_1"/>
    <property type="match status" value="2"/>
</dbReference>
<dbReference type="PROSITE" id="PS50081">
    <property type="entry name" value="ZF_DAG_PE_2"/>
    <property type="match status" value="2"/>
</dbReference>
<gene>
    <name type="primary">Prkcg</name>
    <name type="synonym">Pkcc</name>
    <name type="synonym">Pkcg</name>
    <name type="synonym">Prkcc</name>
</gene>
<sequence>MAGLGPGGGDSEGGPRPLFCRKGALRQKVVHEVKSHKFTARFFKQPTFCSHCTDFIWGIGKQGLQCQVCSFVVHRRCHEFVTFECPGAGKGPQTDDPRNKHKFRLHSYSSPTFCDHCGSLLYGLVHQGMKCSCCEMNVHRRCVRSVPSLCGVDHTERRGRLQLEIRAPTSDEIHITVGEARNLIPMDPNGLSDPYVKLKLIPDPRNLTKQKTKTVKATLNPVWNETFVFNLKPGDVERRLSVEVWDWDRTSRNDFMGAMSFGVSELLKAPVDGWYKLLNQEEGEYYNVPVADADNCSLLQKFEACNYPLELYERVRMGPSSSPIPSPSPSPTDSKRCFFGASPGRLHISDFSFLMVLGKGSFGKVMLAERRGSDELYAIKILKKDVIVQDDDVDCTLVEKRVLALGGRGPGGRPHFLTQLHSTFQTPDRLYFVMEYVTGGDLMYHIQQLGKFKEPHAAFYAAEIAIGLFFLHNQGIIYRDLKLDNVMLDAEGHIKITDFGMCKENVFPGSTTRTFCGTPDYIAPEIIAYQPYGKSVDWWSFGVLLYEMLAGQPPFDGEDEEELFQAIMEQTVTYPKSLSREAVAICKGFLTKHPGKRLGSGPDGEPTIRAHGFFRWIDWERLERLEIAPPFRPRPCGRSGENFDKFFTRAAPALTPPDRLVLASIDQADFQGFTYVNPDFVHPDARSPTSPVPVPVM</sequence>
<evidence type="ECO:0000250" key="1"/>
<evidence type="ECO:0000250" key="2">
    <source>
        <dbReference type="UniProtKB" id="P05129"/>
    </source>
</evidence>
<evidence type="ECO:0000250" key="3">
    <source>
        <dbReference type="UniProtKB" id="P63319"/>
    </source>
</evidence>
<evidence type="ECO:0000255" key="4"/>
<evidence type="ECO:0000255" key="5">
    <source>
        <dbReference type="PROSITE-ProRule" id="PRU00041"/>
    </source>
</evidence>
<evidence type="ECO:0000255" key="6">
    <source>
        <dbReference type="PROSITE-ProRule" id="PRU00159"/>
    </source>
</evidence>
<evidence type="ECO:0000255" key="7">
    <source>
        <dbReference type="PROSITE-ProRule" id="PRU00226"/>
    </source>
</evidence>
<evidence type="ECO:0000255" key="8">
    <source>
        <dbReference type="PROSITE-ProRule" id="PRU00618"/>
    </source>
</evidence>
<evidence type="ECO:0000255" key="9">
    <source>
        <dbReference type="PROSITE-ProRule" id="PRU10027"/>
    </source>
</evidence>
<evidence type="ECO:0000269" key="10">
    <source>
    </source>
</evidence>
<evidence type="ECO:0000269" key="11">
    <source>
    </source>
</evidence>
<evidence type="ECO:0000269" key="12">
    <source>
    </source>
</evidence>
<evidence type="ECO:0000269" key="13">
    <source>
    </source>
</evidence>
<evidence type="ECO:0000269" key="14">
    <source>
    </source>
</evidence>
<evidence type="ECO:0000269" key="15">
    <source>
    </source>
</evidence>
<evidence type="ECO:0000269" key="16">
    <source>
    </source>
</evidence>
<evidence type="ECO:0000269" key="17">
    <source>
    </source>
</evidence>
<evidence type="ECO:0000269" key="18">
    <source>
    </source>
</evidence>
<evidence type="ECO:0000269" key="19">
    <source>
    </source>
</evidence>
<evidence type="ECO:0000305" key="20"/>
<evidence type="ECO:0000305" key="21">
    <source>
    </source>
</evidence>
<evidence type="ECO:0007744" key="22">
    <source>
    </source>
</evidence>
<name>KPCG_MOUSE</name>
<organism>
    <name type="scientific">Mus musculus</name>
    <name type="common">Mouse</name>
    <dbReference type="NCBI Taxonomy" id="10090"/>
    <lineage>
        <taxon>Eukaryota</taxon>
        <taxon>Metazoa</taxon>
        <taxon>Chordata</taxon>
        <taxon>Craniata</taxon>
        <taxon>Vertebrata</taxon>
        <taxon>Euteleostomi</taxon>
        <taxon>Mammalia</taxon>
        <taxon>Eutheria</taxon>
        <taxon>Euarchontoglires</taxon>
        <taxon>Glires</taxon>
        <taxon>Rodentia</taxon>
        <taxon>Myomorpha</taxon>
        <taxon>Muroidea</taxon>
        <taxon>Muridae</taxon>
        <taxon>Murinae</taxon>
        <taxon>Mus</taxon>
        <taxon>Mus</taxon>
    </lineage>
</organism>
<keyword id="KW-0067">ATP-binding</keyword>
<keyword id="KW-0090">Biological rhythms</keyword>
<keyword id="KW-0106">Calcium</keyword>
<keyword id="KW-1003">Cell membrane</keyword>
<keyword id="KW-0966">Cell projection</keyword>
<keyword id="KW-0963">Cytoplasm</keyword>
<keyword id="KW-0418">Kinase</keyword>
<keyword id="KW-0472">Membrane</keyword>
<keyword id="KW-0479">Metal-binding</keyword>
<keyword id="KW-0547">Nucleotide-binding</keyword>
<keyword id="KW-0597">Phosphoprotein</keyword>
<keyword id="KW-1185">Reference proteome</keyword>
<keyword id="KW-0677">Repeat</keyword>
<keyword id="KW-0723">Serine/threonine-protein kinase</keyword>
<keyword id="KW-0770">Synapse</keyword>
<keyword id="KW-0771">Synaptosome</keyword>
<keyword id="KW-0808">Transferase</keyword>
<keyword id="KW-0832">Ubl conjugation</keyword>
<keyword id="KW-0862">Zinc</keyword>
<keyword id="KW-0863">Zinc-finger</keyword>
<comment type="function">
    <text evidence="2 10 11 12 13 14 16 17 19">Calcium-activated, phospholipid- and diacylglycerol (DAG)-dependent serine/threonine-protein kinase that plays diverse roles in neuronal cells and eye tissues, such as regulation of the neuronal receptors GRIA4/GLUR4 and GRIN1/NMDAR1, modulation of receptors and neuronal functions related to sensitivity to opiates, pain and alcohol, mediation of synaptic function and cell survival after ischemia, and inhibition of gap junction activity after oxidative stress. Binds and phosphorylates GRIA4/GLUR4 glutamate receptor and regulates its function by increasing plasma membrane-associated GRIA4 expression. In primary cerebellar neurons treated with the agonist 3,5-dihyidroxyphenylglycine, functions downstream of the metabotropic glutamate receptor GRM5/MGLUR5 and phosphorylates GRIN1/NMDAR1 receptor which plays a key role in synaptic plasticity, synaptogenesis, excitotoxicity, memory acquisition and learning. May be involved in the regulation of hippocampal long-term potentiation (LTP), but may be not necessary for the process of synaptic plasticity. May be involved in desensitization of mu-type opioid receptor-mediated G-protein activation in the spinal cord, and may be critical for the development and/or maintenance of morphine-induced reinforcing effects in the limbic forebrain. May modulate the functionality of mu-type-opioid receptors by participating in a signaling pathway which leads to the phosphorylation and degradation of opioid receptors. May also contribute to chronic morphine-induced changes in nociceptive processing. Plays a role in neuropathic pain mechanisms and contributes to the maintenance of the allodynia pain produced by peripheral inflammation. Plays an important role in initial sensitivity and tolerance to ethanol, by mediating the behavioral effects of ethanol as well as the effects of this drug on the GABA(A) receptors. During and after cerebral ischemia modulate neurotransmission and cell survival in synaptic membranes, and is involved in insulin-induced inhibition of necrosis, an important mechanism for minimizing ischemic injury. Required for the elimination of multiple climbing fibers during innervation of Purkinje cells in developing cerebellum. Is activated in lens epithelial cells upon hydrogen peroxide treatment, and phosphorylates connexin-43 (GJA1/CX43), resulting in disassembly of GJA1 gap junction plaques and inhibition of gap junction activity which could provide a protective effect against oxidative stress. Phosphorylates p53/TP53 and promotes p53/TP53-dependent apoptosis in response to DNA damage. Involved in the phase resetting of the cerebral cortex circadian clock during temporally restricted feeding. Stabilizes the core clock component BMAL1 by interfering with its ubiquitination, thus suppressing its degradation, resulting in phase resetting of the cerebral cortex clock (PubMed:23185022). Phosphorylates and activates LRRK1, which phosphorylates RAB proteins involved in intracellular trafficking (By similarity).</text>
</comment>
<comment type="catalytic activity">
    <reaction evidence="2">
        <text>L-seryl-[protein] + ATP = O-phospho-L-seryl-[protein] + ADP + H(+)</text>
        <dbReference type="Rhea" id="RHEA:17989"/>
        <dbReference type="Rhea" id="RHEA-COMP:9863"/>
        <dbReference type="Rhea" id="RHEA-COMP:11604"/>
        <dbReference type="ChEBI" id="CHEBI:15378"/>
        <dbReference type="ChEBI" id="CHEBI:29999"/>
        <dbReference type="ChEBI" id="CHEBI:30616"/>
        <dbReference type="ChEBI" id="CHEBI:83421"/>
        <dbReference type="ChEBI" id="CHEBI:456216"/>
        <dbReference type="EC" id="2.7.11.13"/>
    </reaction>
</comment>
<comment type="catalytic activity">
    <reaction evidence="2">
        <text>L-threonyl-[protein] + ATP = O-phospho-L-threonyl-[protein] + ADP + H(+)</text>
        <dbReference type="Rhea" id="RHEA:46608"/>
        <dbReference type="Rhea" id="RHEA-COMP:11060"/>
        <dbReference type="Rhea" id="RHEA-COMP:11605"/>
        <dbReference type="ChEBI" id="CHEBI:15378"/>
        <dbReference type="ChEBI" id="CHEBI:30013"/>
        <dbReference type="ChEBI" id="CHEBI:30616"/>
        <dbReference type="ChEBI" id="CHEBI:61977"/>
        <dbReference type="ChEBI" id="CHEBI:456216"/>
        <dbReference type="EC" id="2.7.11.13"/>
    </reaction>
</comment>
<comment type="cofactor">
    <cofactor evidence="5">
        <name>Ca(2+)</name>
        <dbReference type="ChEBI" id="CHEBI:29108"/>
    </cofactor>
    <text evidence="2">Binds 3 Ca(2+) ions per subunit. The ions are bound to the C2 domain.</text>
</comment>
<comment type="activity regulation">
    <text>Classical (or conventional) PKCs (PRKCA, PRKCB and PRKCG) are activated by calcium and diacylglycerol (DAG) in the presence of phosphatidylserine. Three specific sites; Thr-514 (activation loop of the kinase domain), Thr-655 (turn motif) and Thr-674 (hydrophobic region), need to be phosphorylated for its full activation.</text>
</comment>
<comment type="subunit">
    <text evidence="2 3 16">Interacts with CDCP1 and GRIA4 (By similarity). Interacts with TP53INP1 and p53/TP53 (By similarity). Interacts with BMAL1.</text>
</comment>
<comment type="subcellular location">
    <subcellularLocation>
        <location evidence="14">Cytoplasm</location>
    </subcellularLocation>
    <subcellularLocation>
        <location evidence="1">Cytoplasm</location>
        <location evidence="1">Perinuclear region</location>
    </subcellularLocation>
    <subcellularLocation>
        <location evidence="14 15">Cell membrane</location>
        <topology>Peripheral membrane protein</topology>
    </subcellularLocation>
    <subcellularLocation>
        <location evidence="15">Synapse</location>
        <location evidence="15">Synaptosome</location>
    </subcellularLocation>
    <subcellularLocation>
        <location evidence="3">Cell projection</location>
        <location evidence="3">Dendrite</location>
    </subcellularLocation>
    <text evidence="15">Translocates to synaptic membranes on stimulation.</text>
</comment>
<comment type="tissue specificity">
    <text evidence="14 16">Expressed in the cerebellum, cerebral cortex and hippocampus (at protein level). Highly expressed in Purkinje cells.</text>
</comment>
<comment type="PTM">
    <text evidence="14">Autophosphorylation on Thr-674 appears to regulate motor functions of junctophilins, JPH3 and JPH4.</text>
</comment>
<comment type="PTM">
    <text evidence="2">Ubiquitinated.</text>
</comment>
<comment type="disruption phenotype">
    <text evidence="16 18">Mice exhibit impaired motor coordination due to the inability to eliminate multiple climbing fibers during innervation of Purkinje cells. 40% of Purkinje cells are still innervated by multiple climbing fibers. Exhibit food-anticipatory activity comparable to that of wild type mice but they do not reduce their late night activity or adapt their food intake amount to restricted feeding as efficiently as wild type mice.</text>
</comment>
<comment type="similarity">
    <text evidence="20">Belongs to the protein kinase superfamily. AGC Ser/Thr protein kinase family. PKC subfamily.</text>
</comment>